<accession>A6UWC6</accession>
<keyword id="KW-0413">Isomerase</keyword>
<keyword id="KW-0819">tRNA processing</keyword>
<comment type="function">
    <text evidence="1">Could be responsible for synthesis of pseudouridine from uracil-55 in the psi GC loop of transfer RNAs.</text>
</comment>
<comment type="catalytic activity">
    <reaction evidence="1">
        <text>uridine(55) in tRNA = pseudouridine(55) in tRNA</text>
        <dbReference type="Rhea" id="RHEA:42532"/>
        <dbReference type="Rhea" id="RHEA-COMP:10101"/>
        <dbReference type="Rhea" id="RHEA-COMP:10102"/>
        <dbReference type="ChEBI" id="CHEBI:65314"/>
        <dbReference type="ChEBI" id="CHEBI:65315"/>
        <dbReference type="EC" id="5.4.99.25"/>
    </reaction>
</comment>
<comment type="similarity">
    <text evidence="1">Belongs to the pseudouridine synthase TruB family. Type 2 subfamily.</text>
</comment>
<name>TRUB_META3</name>
<reference key="1">
    <citation type="submission" date="2007-06" db="EMBL/GenBank/DDBJ databases">
        <title>Complete sequence of Methanococcus aeolicus Nankai-3.</title>
        <authorList>
            <consortium name="US DOE Joint Genome Institute"/>
            <person name="Copeland A."/>
            <person name="Lucas S."/>
            <person name="Lapidus A."/>
            <person name="Barry K."/>
            <person name="Glavina del Rio T."/>
            <person name="Dalin E."/>
            <person name="Tice H."/>
            <person name="Pitluck S."/>
            <person name="Chain P."/>
            <person name="Malfatti S."/>
            <person name="Shin M."/>
            <person name="Vergez L."/>
            <person name="Schmutz J."/>
            <person name="Larimer F."/>
            <person name="Land M."/>
            <person name="Hauser L."/>
            <person name="Kyrpides N."/>
            <person name="Lykidis A."/>
            <person name="Sieprawska-Lupa M."/>
            <person name="Whitman W.B."/>
            <person name="Richardson P."/>
        </authorList>
    </citation>
    <scope>NUCLEOTIDE SEQUENCE [LARGE SCALE GENOMIC DNA]</scope>
    <source>
        <strain>ATCC BAA-1280 / DSM 17508 / OCM 812 / Nankai-3</strain>
    </source>
</reference>
<sequence length="331" mass="37717">MELITKEESKTNYEYGCDPYNRPIGELLKNGIVVIDKPSGPTSHEVSAWVRDILKLKLAGHGGTLDPKVTGVLPVALENTSKCISVWHMIPKEYVCLMHLHRDTEEEELLKIFKKFTGRIFQRPPLKAAVKRSLRIRKIYELELLEKDGRDVLFRVRCQSGTYIRTLAEDMGEALGTSAHMQELRRIVSGPFTEKDIVYLQDLTDAYIFWKENGDETELRKIIKPMEYGLQHINKIIVKDSAVDAICHGANVYLNGVSKLSKGIGADETVLIETLKGEAIGIGTALLNTKNVLKESKNEEDNREKYKEPIVDIERIFMSPNTYPKMWKKKK</sequence>
<gene>
    <name evidence="1" type="primary">truB</name>
    <name type="ordered locus">Maeo_1222</name>
</gene>
<protein>
    <recommendedName>
        <fullName evidence="1">Probable tRNA pseudouridine synthase B</fullName>
        <ecNumber evidence="1">5.4.99.25</ecNumber>
    </recommendedName>
    <alternativeName>
        <fullName evidence="1">tRNA pseudouridine(55) synthase</fullName>
        <shortName evidence="1">Psi55 synthase</shortName>
    </alternativeName>
    <alternativeName>
        <fullName evidence="1">tRNA pseudouridylate synthase</fullName>
    </alternativeName>
    <alternativeName>
        <fullName evidence="1">tRNA-uridine isomerase</fullName>
    </alternativeName>
</protein>
<proteinExistence type="inferred from homology"/>
<evidence type="ECO:0000255" key="1">
    <source>
        <dbReference type="HAMAP-Rule" id="MF_01081"/>
    </source>
</evidence>
<feature type="chain" id="PRO_1000084720" description="Probable tRNA pseudouridine synthase B">
    <location>
        <begin position="1"/>
        <end position="331"/>
    </location>
</feature>
<feature type="domain" description="PUA" evidence="1">
    <location>
        <begin position="233"/>
        <end position="307"/>
    </location>
</feature>
<feature type="active site" description="Nucleophile" evidence="1">
    <location>
        <position position="66"/>
    </location>
</feature>
<organism>
    <name type="scientific">Methanococcus aeolicus (strain ATCC BAA-1280 / DSM 17508 / OCM 812 / Nankai-3)</name>
    <dbReference type="NCBI Taxonomy" id="419665"/>
    <lineage>
        <taxon>Archaea</taxon>
        <taxon>Methanobacteriati</taxon>
        <taxon>Methanobacteriota</taxon>
        <taxon>Methanomada group</taxon>
        <taxon>Methanococci</taxon>
        <taxon>Methanococcales</taxon>
        <taxon>Methanococcaceae</taxon>
        <taxon>Methanococcus</taxon>
    </lineage>
</organism>
<dbReference type="EC" id="5.4.99.25" evidence="1"/>
<dbReference type="EMBL" id="CP000743">
    <property type="protein sequence ID" value="ABR56798.1"/>
    <property type="molecule type" value="Genomic_DNA"/>
</dbReference>
<dbReference type="RefSeq" id="WP_011973930.1">
    <property type="nucleotide sequence ID" value="NC_009635.1"/>
</dbReference>
<dbReference type="SMR" id="A6UWC6"/>
<dbReference type="STRING" id="419665.Maeo_1222"/>
<dbReference type="GeneID" id="5327489"/>
<dbReference type="KEGG" id="mae:Maeo_1222"/>
<dbReference type="eggNOG" id="arCOG00987">
    <property type="taxonomic scope" value="Archaea"/>
</dbReference>
<dbReference type="HOGENOM" id="CLU_032087_3_0_2"/>
<dbReference type="Proteomes" id="UP000001106">
    <property type="component" value="Chromosome"/>
</dbReference>
<dbReference type="GO" id="GO:0003723">
    <property type="term" value="F:RNA binding"/>
    <property type="evidence" value="ECO:0007669"/>
    <property type="project" value="InterPro"/>
</dbReference>
<dbReference type="GO" id="GO:0160148">
    <property type="term" value="F:tRNA pseudouridine(55) synthase activity"/>
    <property type="evidence" value="ECO:0007669"/>
    <property type="project" value="UniProtKB-EC"/>
</dbReference>
<dbReference type="GO" id="GO:0000495">
    <property type="term" value="P:box H/ACA sno(s)RNA 3'-end processing"/>
    <property type="evidence" value="ECO:0007669"/>
    <property type="project" value="TreeGrafter"/>
</dbReference>
<dbReference type="GO" id="GO:1990481">
    <property type="term" value="P:mRNA pseudouridine synthesis"/>
    <property type="evidence" value="ECO:0007669"/>
    <property type="project" value="TreeGrafter"/>
</dbReference>
<dbReference type="GO" id="GO:0031118">
    <property type="term" value="P:rRNA pseudouridine synthesis"/>
    <property type="evidence" value="ECO:0007669"/>
    <property type="project" value="TreeGrafter"/>
</dbReference>
<dbReference type="GO" id="GO:0031120">
    <property type="term" value="P:snRNA pseudouridine synthesis"/>
    <property type="evidence" value="ECO:0007669"/>
    <property type="project" value="TreeGrafter"/>
</dbReference>
<dbReference type="GO" id="GO:0031119">
    <property type="term" value="P:tRNA pseudouridine synthesis"/>
    <property type="evidence" value="ECO:0007669"/>
    <property type="project" value="UniProtKB-UniRule"/>
</dbReference>
<dbReference type="CDD" id="cd02572">
    <property type="entry name" value="PseudoU_synth_hDyskerin"/>
    <property type="match status" value="1"/>
</dbReference>
<dbReference type="CDD" id="cd21148">
    <property type="entry name" value="PUA_Cbf5"/>
    <property type="match status" value="1"/>
</dbReference>
<dbReference type="FunFam" id="3.30.2350.10:FF:000001">
    <property type="entry name" value="H/ACA ribonucleoprotein complex subunit CBF5"/>
    <property type="match status" value="1"/>
</dbReference>
<dbReference type="Gene3D" id="3.30.2350.10">
    <property type="entry name" value="Pseudouridine synthase"/>
    <property type="match status" value="1"/>
</dbReference>
<dbReference type="Gene3D" id="2.30.130.10">
    <property type="entry name" value="PUA domain"/>
    <property type="match status" value="1"/>
</dbReference>
<dbReference type="HAMAP" id="MF_01081">
    <property type="entry name" value="TruB_arch"/>
    <property type="match status" value="1"/>
</dbReference>
<dbReference type="InterPro" id="IPR012960">
    <property type="entry name" value="Dyskerin-like"/>
</dbReference>
<dbReference type="InterPro" id="IPR020103">
    <property type="entry name" value="PsdUridine_synth_cat_dom_sf"/>
</dbReference>
<dbReference type="InterPro" id="IPR002501">
    <property type="entry name" value="PsdUridine_synth_N"/>
</dbReference>
<dbReference type="InterPro" id="IPR002478">
    <property type="entry name" value="PUA"/>
</dbReference>
<dbReference type="InterPro" id="IPR015947">
    <property type="entry name" value="PUA-like_sf"/>
</dbReference>
<dbReference type="InterPro" id="IPR036974">
    <property type="entry name" value="PUA_sf"/>
</dbReference>
<dbReference type="InterPro" id="IPR004802">
    <property type="entry name" value="tRNA_PsdUridine_synth_B_fam"/>
</dbReference>
<dbReference type="InterPro" id="IPR026326">
    <property type="entry name" value="TruB_arch"/>
</dbReference>
<dbReference type="InterPro" id="IPR032819">
    <property type="entry name" value="TruB_C"/>
</dbReference>
<dbReference type="NCBIfam" id="TIGR00425">
    <property type="entry name" value="CBF5"/>
    <property type="match status" value="1"/>
</dbReference>
<dbReference type="NCBIfam" id="NF003280">
    <property type="entry name" value="PRK04270.1"/>
    <property type="match status" value="1"/>
</dbReference>
<dbReference type="PANTHER" id="PTHR23127">
    <property type="entry name" value="CENTROMERE/MICROTUBULE BINDING PROTEIN CBF5"/>
    <property type="match status" value="1"/>
</dbReference>
<dbReference type="PANTHER" id="PTHR23127:SF0">
    <property type="entry name" value="H_ACA RIBONUCLEOPROTEIN COMPLEX SUBUNIT DKC1"/>
    <property type="match status" value="1"/>
</dbReference>
<dbReference type="Pfam" id="PF08068">
    <property type="entry name" value="DKCLD"/>
    <property type="match status" value="1"/>
</dbReference>
<dbReference type="Pfam" id="PF01472">
    <property type="entry name" value="PUA"/>
    <property type="match status" value="1"/>
</dbReference>
<dbReference type="Pfam" id="PF16198">
    <property type="entry name" value="TruB_C_2"/>
    <property type="match status" value="1"/>
</dbReference>
<dbReference type="Pfam" id="PF01509">
    <property type="entry name" value="TruB_N"/>
    <property type="match status" value="1"/>
</dbReference>
<dbReference type="SMART" id="SM01136">
    <property type="entry name" value="DKCLD"/>
    <property type="match status" value="1"/>
</dbReference>
<dbReference type="SMART" id="SM00359">
    <property type="entry name" value="PUA"/>
    <property type="match status" value="1"/>
</dbReference>
<dbReference type="SUPFAM" id="SSF55120">
    <property type="entry name" value="Pseudouridine synthase"/>
    <property type="match status" value="1"/>
</dbReference>
<dbReference type="SUPFAM" id="SSF88697">
    <property type="entry name" value="PUA domain-like"/>
    <property type="match status" value="1"/>
</dbReference>
<dbReference type="PROSITE" id="PS50890">
    <property type="entry name" value="PUA"/>
    <property type="match status" value="1"/>
</dbReference>